<organism>
    <name type="scientific">Bacillus cereus (strain ATCC 10987 / NRS 248)</name>
    <dbReference type="NCBI Taxonomy" id="222523"/>
    <lineage>
        <taxon>Bacteria</taxon>
        <taxon>Bacillati</taxon>
        <taxon>Bacillota</taxon>
        <taxon>Bacilli</taxon>
        <taxon>Bacillales</taxon>
        <taxon>Bacillaceae</taxon>
        <taxon>Bacillus</taxon>
        <taxon>Bacillus cereus group</taxon>
    </lineage>
</organism>
<feature type="chain" id="PRO_0000195276" description="Glucose-1-phosphate adenylyltransferase">
    <location>
        <begin position="1"/>
        <end position="376"/>
    </location>
</feature>
<feature type="binding site" evidence="1">
    <location>
        <position position="101"/>
    </location>
    <ligand>
        <name>alpha-D-glucose 1-phosphate</name>
        <dbReference type="ChEBI" id="CHEBI:58601"/>
    </ligand>
</feature>
<feature type="binding site" evidence="1">
    <location>
        <position position="166"/>
    </location>
    <ligand>
        <name>alpha-D-glucose 1-phosphate</name>
        <dbReference type="ChEBI" id="CHEBI:58601"/>
    </ligand>
</feature>
<feature type="binding site" evidence="1">
    <location>
        <begin position="181"/>
        <end position="182"/>
    </location>
    <ligand>
        <name>alpha-D-glucose 1-phosphate</name>
        <dbReference type="ChEBI" id="CHEBI:58601"/>
    </ligand>
</feature>
<feature type="binding site" evidence="1">
    <location>
        <position position="192"/>
    </location>
    <ligand>
        <name>alpha-D-glucose 1-phosphate</name>
        <dbReference type="ChEBI" id="CHEBI:58601"/>
    </ligand>
</feature>
<comment type="function">
    <text evidence="1">Involved in the biosynthesis of ADP-glucose, a building block required for the elongation reactions to produce glycogen. Catalyzes the reaction between ATP and alpha-D-glucose 1-phosphate (G1P) to produce pyrophosphate and ADP-Glc.</text>
</comment>
<comment type="catalytic activity">
    <reaction evidence="1">
        <text>alpha-D-glucose 1-phosphate + ATP + H(+) = ADP-alpha-D-glucose + diphosphate</text>
        <dbReference type="Rhea" id="RHEA:12120"/>
        <dbReference type="ChEBI" id="CHEBI:15378"/>
        <dbReference type="ChEBI" id="CHEBI:30616"/>
        <dbReference type="ChEBI" id="CHEBI:33019"/>
        <dbReference type="ChEBI" id="CHEBI:57498"/>
        <dbReference type="ChEBI" id="CHEBI:58601"/>
        <dbReference type="EC" id="2.7.7.27"/>
    </reaction>
</comment>
<comment type="pathway">
    <text evidence="1">Glycan biosynthesis; glycogen biosynthesis.</text>
</comment>
<comment type="subunit">
    <text evidence="1">Homotetramer.</text>
</comment>
<comment type="similarity">
    <text evidence="1">Belongs to the bacterial/plant glucose-1-phosphate adenylyltransferase family.</text>
</comment>
<sequence length="376" mass="42033">MAQKQKCVAMLLAGGKGSRLSALTKNLAKPAVPFGGKYRIIDFTLSNCANSGIETVGILTQYQPLELHNYIGIGNAWDLDRVSGGVTVLPPYAESSGVKWYTGTASAIYQNLNYLSQYEPEYVLILSGDHIYKMDYSKMLDYHIEKEADVSISVIEVPWDEASRFGIMNTNEEMEIVEFEEKPQFPRSNLASMGIYIFNWAILKEYLEMDARNPESSNDFGKDVLPLLLDEGKKLMAYPFEGYWKDVGTVKSLWEANMDLLRDETSLNLNDRNWRIYSVNPNEPPQYIAEKAKVEESLINEGCVIEGDVKHSVLFQGVTVEEGSMVIDSVVMPGAKIGKNVVIERAIVGSEMVIEDGTIIRPEKNVDDVVLIAEGK</sequence>
<dbReference type="EC" id="2.7.7.27" evidence="1"/>
<dbReference type="EMBL" id="AE017194">
    <property type="protein sequence ID" value="AAS43928.1"/>
    <property type="molecule type" value="Genomic_DNA"/>
</dbReference>
<dbReference type="SMR" id="Q72YJ4"/>
<dbReference type="KEGG" id="bca:BCE_5027"/>
<dbReference type="HOGENOM" id="CLU_029499_14_0_9"/>
<dbReference type="UniPathway" id="UPA00164"/>
<dbReference type="Proteomes" id="UP000002527">
    <property type="component" value="Chromosome"/>
</dbReference>
<dbReference type="GO" id="GO:0005524">
    <property type="term" value="F:ATP binding"/>
    <property type="evidence" value="ECO:0007669"/>
    <property type="project" value="UniProtKB-KW"/>
</dbReference>
<dbReference type="GO" id="GO:0008878">
    <property type="term" value="F:glucose-1-phosphate adenylyltransferase activity"/>
    <property type="evidence" value="ECO:0007669"/>
    <property type="project" value="UniProtKB-UniRule"/>
</dbReference>
<dbReference type="GO" id="GO:0005978">
    <property type="term" value="P:glycogen biosynthetic process"/>
    <property type="evidence" value="ECO:0007669"/>
    <property type="project" value="UniProtKB-UniRule"/>
</dbReference>
<dbReference type="CDD" id="cd02508">
    <property type="entry name" value="ADP_Glucose_PP"/>
    <property type="match status" value="1"/>
</dbReference>
<dbReference type="CDD" id="cd04651">
    <property type="entry name" value="LbH_G1P_AT_C"/>
    <property type="match status" value="1"/>
</dbReference>
<dbReference type="FunFam" id="2.160.10.10:FF:000022">
    <property type="entry name" value="Glucose-1-phosphate adenylyltransferase"/>
    <property type="match status" value="1"/>
</dbReference>
<dbReference type="FunFam" id="3.90.550.10:FF:000083">
    <property type="entry name" value="Glucose-1-phosphate adenylyltransferase"/>
    <property type="match status" value="1"/>
</dbReference>
<dbReference type="Gene3D" id="2.160.10.10">
    <property type="entry name" value="Hexapeptide repeat proteins"/>
    <property type="match status" value="1"/>
</dbReference>
<dbReference type="Gene3D" id="3.90.550.10">
    <property type="entry name" value="Spore Coat Polysaccharide Biosynthesis Protein SpsA, Chain A"/>
    <property type="match status" value="1"/>
</dbReference>
<dbReference type="HAMAP" id="MF_00624">
    <property type="entry name" value="GlgC"/>
    <property type="match status" value="1"/>
</dbReference>
<dbReference type="InterPro" id="IPR011831">
    <property type="entry name" value="ADP-Glc_PPase"/>
</dbReference>
<dbReference type="InterPro" id="IPR005836">
    <property type="entry name" value="ADP_Glu_pyroP_CS"/>
</dbReference>
<dbReference type="InterPro" id="IPR023049">
    <property type="entry name" value="GlgC_bac"/>
</dbReference>
<dbReference type="InterPro" id="IPR056818">
    <property type="entry name" value="GlmU/GlgC-like_hexapep"/>
</dbReference>
<dbReference type="InterPro" id="IPR005835">
    <property type="entry name" value="NTP_transferase_dom"/>
</dbReference>
<dbReference type="InterPro" id="IPR029044">
    <property type="entry name" value="Nucleotide-diphossugar_trans"/>
</dbReference>
<dbReference type="InterPro" id="IPR011004">
    <property type="entry name" value="Trimer_LpxA-like_sf"/>
</dbReference>
<dbReference type="NCBIfam" id="TIGR02091">
    <property type="entry name" value="glgC"/>
    <property type="match status" value="1"/>
</dbReference>
<dbReference type="NCBIfam" id="NF003670">
    <property type="entry name" value="PRK05293.1"/>
    <property type="match status" value="1"/>
</dbReference>
<dbReference type="PANTHER" id="PTHR43523:SF2">
    <property type="entry name" value="GLUCOSE-1-PHOSPHATE ADENYLYLTRANSFERASE"/>
    <property type="match status" value="1"/>
</dbReference>
<dbReference type="PANTHER" id="PTHR43523">
    <property type="entry name" value="GLUCOSE-1-PHOSPHATE ADENYLYLTRANSFERASE-RELATED"/>
    <property type="match status" value="1"/>
</dbReference>
<dbReference type="Pfam" id="PF24894">
    <property type="entry name" value="Hexapep_GlmU"/>
    <property type="match status" value="1"/>
</dbReference>
<dbReference type="Pfam" id="PF00483">
    <property type="entry name" value="NTP_transferase"/>
    <property type="match status" value="1"/>
</dbReference>
<dbReference type="SUPFAM" id="SSF53448">
    <property type="entry name" value="Nucleotide-diphospho-sugar transferases"/>
    <property type="match status" value="1"/>
</dbReference>
<dbReference type="SUPFAM" id="SSF51161">
    <property type="entry name" value="Trimeric LpxA-like enzymes"/>
    <property type="match status" value="1"/>
</dbReference>
<dbReference type="PROSITE" id="PS00808">
    <property type="entry name" value="ADP_GLC_PYROPHOSPH_1"/>
    <property type="match status" value="1"/>
</dbReference>
<dbReference type="PROSITE" id="PS00809">
    <property type="entry name" value="ADP_GLC_PYROPHOSPH_2"/>
    <property type="match status" value="1"/>
</dbReference>
<evidence type="ECO:0000255" key="1">
    <source>
        <dbReference type="HAMAP-Rule" id="MF_00624"/>
    </source>
</evidence>
<name>GLGC_BACC1</name>
<accession>Q72YJ4</accession>
<reference key="1">
    <citation type="journal article" date="2004" name="Nucleic Acids Res.">
        <title>The genome sequence of Bacillus cereus ATCC 10987 reveals metabolic adaptations and a large plasmid related to Bacillus anthracis pXO1.</title>
        <authorList>
            <person name="Rasko D.A."/>
            <person name="Ravel J."/>
            <person name="Oekstad O.A."/>
            <person name="Helgason E."/>
            <person name="Cer R.Z."/>
            <person name="Jiang L."/>
            <person name="Shores K.A."/>
            <person name="Fouts D.E."/>
            <person name="Tourasse N.J."/>
            <person name="Angiuoli S.V."/>
            <person name="Kolonay J.F."/>
            <person name="Nelson W.C."/>
            <person name="Kolstoe A.-B."/>
            <person name="Fraser C.M."/>
            <person name="Read T.D."/>
        </authorList>
    </citation>
    <scope>NUCLEOTIDE SEQUENCE [LARGE SCALE GENOMIC DNA]</scope>
    <source>
        <strain>ATCC 10987 / NRS 248</strain>
    </source>
</reference>
<proteinExistence type="inferred from homology"/>
<protein>
    <recommendedName>
        <fullName evidence="1">Glucose-1-phosphate adenylyltransferase</fullName>
        <ecNumber evidence="1">2.7.7.27</ecNumber>
    </recommendedName>
    <alternativeName>
        <fullName evidence="1">ADP-glucose pyrophosphorylase</fullName>
        <shortName evidence="1">ADPGlc PPase</shortName>
    </alternativeName>
    <alternativeName>
        <fullName evidence="1">ADP-glucose synthase</fullName>
    </alternativeName>
</protein>
<gene>
    <name evidence="1" type="primary">glgC</name>
    <name type="ordered locus">BCE_5027</name>
</gene>
<keyword id="KW-0067">ATP-binding</keyword>
<keyword id="KW-0119">Carbohydrate metabolism</keyword>
<keyword id="KW-0320">Glycogen biosynthesis</keyword>
<keyword id="KW-0321">Glycogen metabolism</keyword>
<keyword id="KW-0547">Nucleotide-binding</keyword>
<keyword id="KW-0548">Nucleotidyltransferase</keyword>
<keyword id="KW-0808">Transferase</keyword>